<protein>
    <recommendedName>
        <fullName>Uncharacterized protein Mb1454</fullName>
    </recommendedName>
</protein>
<accession>P64850</accession>
<accession>A0A1R3XYB3</accession>
<accession>P71688</accession>
<accession>X2BHK4</accession>
<gene>
    <name type="ordered locus">BQ2027_MB1454</name>
</gene>
<keyword id="KW-0430">Lectin</keyword>
<keyword id="KW-0472">Membrane</keyword>
<keyword id="KW-1185">Reference proteome</keyword>
<keyword id="KW-0812">Transmembrane</keyword>
<keyword id="KW-1133">Transmembrane helix</keyword>
<feature type="chain" id="PRO_0000103846" description="Uncharacterized protein Mb1454">
    <location>
        <begin position="1"/>
        <end position="157"/>
    </location>
</feature>
<feature type="transmembrane region" description="Helical" evidence="1">
    <location>
        <begin position="6"/>
        <end position="26"/>
    </location>
</feature>
<feature type="domain" description="Ricin B-type lectin" evidence="2">
    <location>
        <begin position="33"/>
        <end position="157"/>
    </location>
</feature>
<proteinExistence type="predicted"/>
<dbReference type="EMBL" id="LT708304">
    <property type="protein sequence ID" value="SIU00057.1"/>
    <property type="molecule type" value="Genomic_DNA"/>
</dbReference>
<dbReference type="RefSeq" id="NP_855106.1">
    <property type="nucleotide sequence ID" value="NC_002945.3"/>
</dbReference>
<dbReference type="RefSeq" id="WP_003407345.1">
    <property type="nucleotide sequence ID" value="NC_002945.4"/>
</dbReference>
<dbReference type="SMR" id="P64850"/>
<dbReference type="KEGG" id="mbo:BQ2027_MB1454"/>
<dbReference type="PATRIC" id="fig|233413.5.peg.1589"/>
<dbReference type="Proteomes" id="UP000001419">
    <property type="component" value="Chromosome"/>
</dbReference>
<dbReference type="GO" id="GO:0016020">
    <property type="term" value="C:membrane"/>
    <property type="evidence" value="ECO:0007669"/>
    <property type="project" value="UniProtKB-SubCell"/>
</dbReference>
<dbReference type="GO" id="GO:0030246">
    <property type="term" value="F:carbohydrate binding"/>
    <property type="evidence" value="ECO:0007669"/>
    <property type="project" value="UniProtKB-KW"/>
</dbReference>
<dbReference type="CDD" id="cd00161">
    <property type="entry name" value="beta-trefoil_Ricin-like"/>
    <property type="match status" value="1"/>
</dbReference>
<dbReference type="Gene3D" id="2.80.10.50">
    <property type="match status" value="2"/>
</dbReference>
<dbReference type="InterPro" id="IPR035992">
    <property type="entry name" value="Ricin_B-like_lectins"/>
</dbReference>
<dbReference type="InterPro" id="IPR000772">
    <property type="entry name" value="Ricin_B_lectin"/>
</dbReference>
<dbReference type="Pfam" id="PF00652">
    <property type="entry name" value="Ricin_B_lectin"/>
    <property type="match status" value="1"/>
</dbReference>
<dbReference type="SMART" id="SM00458">
    <property type="entry name" value="RICIN"/>
    <property type="match status" value="1"/>
</dbReference>
<dbReference type="SUPFAM" id="SSF50370">
    <property type="entry name" value="Ricin B-like lectins"/>
    <property type="match status" value="1"/>
</dbReference>
<dbReference type="PROSITE" id="PS50231">
    <property type="entry name" value="RICIN_B_LECTIN"/>
    <property type="match status" value="1"/>
</dbReference>
<organism>
    <name type="scientific">Mycobacterium bovis (strain ATCC BAA-935 / AF2122/97)</name>
    <dbReference type="NCBI Taxonomy" id="233413"/>
    <lineage>
        <taxon>Bacteria</taxon>
        <taxon>Bacillati</taxon>
        <taxon>Actinomycetota</taxon>
        <taxon>Actinomycetes</taxon>
        <taxon>Mycobacteriales</taxon>
        <taxon>Mycobacteriaceae</taxon>
        <taxon>Mycobacterium</taxon>
        <taxon>Mycobacterium tuberculosis complex</taxon>
    </lineage>
</organism>
<evidence type="ECO:0000255" key="1"/>
<evidence type="ECO:0000255" key="2">
    <source>
        <dbReference type="PROSITE-ProRule" id="PRU00174"/>
    </source>
</evidence>
<evidence type="ECO:0000305" key="3"/>
<name>Y1454_MYCBO</name>
<reference key="1">
    <citation type="journal article" date="2003" name="Proc. Natl. Acad. Sci. U.S.A.">
        <title>The complete genome sequence of Mycobacterium bovis.</title>
        <authorList>
            <person name="Garnier T."/>
            <person name="Eiglmeier K."/>
            <person name="Camus J.-C."/>
            <person name="Medina N."/>
            <person name="Mansoor H."/>
            <person name="Pryor M."/>
            <person name="Duthoy S."/>
            <person name="Grondin S."/>
            <person name="Lacroix C."/>
            <person name="Monsempe C."/>
            <person name="Simon S."/>
            <person name="Harris B."/>
            <person name="Atkin R."/>
            <person name="Doggett J."/>
            <person name="Mayes R."/>
            <person name="Keating L."/>
            <person name="Wheeler P.R."/>
            <person name="Parkhill J."/>
            <person name="Barrell B.G."/>
            <person name="Cole S.T."/>
            <person name="Gordon S.V."/>
            <person name="Hewinson R.G."/>
        </authorList>
    </citation>
    <scope>NUCLEOTIDE SEQUENCE [LARGE SCALE GENOMIC DNA]</scope>
    <source>
        <strain>ATCC BAA-935 / AF2122/97</strain>
    </source>
</reference>
<reference key="2">
    <citation type="journal article" date="2017" name="Genome Announc.">
        <title>Updated reference genome sequence and annotation of Mycobacterium bovis AF2122/97.</title>
        <authorList>
            <person name="Malone K.M."/>
            <person name="Farrell D."/>
            <person name="Stuber T.P."/>
            <person name="Schubert O.T."/>
            <person name="Aebersold R."/>
            <person name="Robbe-Austerman S."/>
            <person name="Gordon S.V."/>
        </authorList>
    </citation>
    <scope>NUCLEOTIDE SEQUENCE [LARGE SCALE GENOMIC DNA]</scope>
    <scope>GENOME REANNOTATION</scope>
    <source>
        <strain>ATCC BAA-935 / AF2122/97</strain>
    </source>
</reference>
<comment type="subcellular location">
    <subcellularLocation>
        <location evidence="3">Membrane</location>
        <topology evidence="3">Single-pass membrane protein</topology>
    </subcellularLocation>
</comment>
<sequence length="157" mass="16853">MGELRLVGGVLRVLVVVGAVFDVAVLNAGAASADGPVQLKSRLGDVCLDAPSGSWFSPLVINPCNGTDFQRWNLTDDRQVESVAFPGECVNIGNALWARLQPCVNWISQHWTVQPDGLVKSDLDACLTVLGGPDPGTWVSTRWCDPNAPDQQWDSVP</sequence>